<reference key="1">
    <citation type="journal article" date="2003" name="J. Bacteriol.">
        <title>Comparative analyses of the complete genome sequences of Pierce's disease and citrus variegated chlorosis strains of Xylella fastidiosa.</title>
        <authorList>
            <person name="Van Sluys M.A."/>
            <person name="de Oliveira M.C."/>
            <person name="Monteiro-Vitorello C.B."/>
            <person name="Miyaki C.Y."/>
            <person name="Furlan L.R."/>
            <person name="Camargo L.E.A."/>
            <person name="da Silva A.C.R."/>
            <person name="Moon D.H."/>
            <person name="Takita M.A."/>
            <person name="Lemos E.G.M."/>
            <person name="Machado M.A."/>
            <person name="Ferro M.I.T."/>
            <person name="da Silva F.R."/>
            <person name="Goldman M.H.S."/>
            <person name="Goldman G.H."/>
            <person name="Lemos M.V.F."/>
            <person name="El-Dorry H."/>
            <person name="Tsai S.M."/>
            <person name="Carrer H."/>
            <person name="Carraro D.M."/>
            <person name="de Oliveira R.C."/>
            <person name="Nunes L.R."/>
            <person name="Siqueira W.J."/>
            <person name="Coutinho L.L."/>
            <person name="Kimura E.T."/>
            <person name="Ferro E.S."/>
            <person name="Harakava R."/>
            <person name="Kuramae E.E."/>
            <person name="Marino C.L."/>
            <person name="Giglioti E."/>
            <person name="Abreu I.L."/>
            <person name="Alves L.M.C."/>
            <person name="do Amaral A.M."/>
            <person name="Baia G.S."/>
            <person name="Blanco S.R."/>
            <person name="Brito M.S."/>
            <person name="Cannavan F.S."/>
            <person name="Celestino A.V."/>
            <person name="da Cunha A.F."/>
            <person name="Fenille R.C."/>
            <person name="Ferro J.A."/>
            <person name="Formighieri E.F."/>
            <person name="Kishi L.T."/>
            <person name="Leoni S.G."/>
            <person name="Oliveira A.R."/>
            <person name="Rosa V.E. Jr."/>
            <person name="Sassaki F.T."/>
            <person name="Sena J.A.D."/>
            <person name="de Souza A.A."/>
            <person name="Truffi D."/>
            <person name="Tsukumo F."/>
            <person name="Yanai G.M."/>
            <person name="Zaros L.G."/>
            <person name="Civerolo E.L."/>
            <person name="Simpson A.J.G."/>
            <person name="Almeida N.F. Jr."/>
            <person name="Setubal J.C."/>
            <person name="Kitajima J.P."/>
        </authorList>
    </citation>
    <scope>NUCLEOTIDE SEQUENCE [LARGE SCALE GENOMIC DNA]</scope>
    <source>
        <strain>Temecula1 / ATCC 700964</strain>
    </source>
</reference>
<accession>Q87EG7</accession>
<organism>
    <name type="scientific">Xylella fastidiosa (strain Temecula1 / ATCC 700964)</name>
    <dbReference type="NCBI Taxonomy" id="183190"/>
    <lineage>
        <taxon>Bacteria</taxon>
        <taxon>Pseudomonadati</taxon>
        <taxon>Pseudomonadota</taxon>
        <taxon>Gammaproteobacteria</taxon>
        <taxon>Lysobacterales</taxon>
        <taxon>Lysobacteraceae</taxon>
        <taxon>Xylella</taxon>
    </lineage>
</organism>
<feature type="chain" id="PRO_0000090111" description="6-phosphogluconolactonase">
    <location>
        <begin position="1"/>
        <end position="239"/>
    </location>
</feature>
<proteinExistence type="inferred from homology"/>
<name>6PGL_XYLFT</name>
<evidence type="ECO:0000305" key="1"/>
<keyword id="KW-0378">Hydrolase</keyword>
<keyword id="KW-1185">Reference proteome</keyword>
<dbReference type="EC" id="3.1.1.31"/>
<dbReference type="EMBL" id="AE009442">
    <property type="protein sequence ID" value="AAO28224.1"/>
    <property type="molecule type" value="Genomic_DNA"/>
</dbReference>
<dbReference type="RefSeq" id="WP_011097597.1">
    <property type="nucleotide sequence ID" value="NC_004556.1"/>
</dbReference>
<dbReference type="SMR" id="Q87EG7"/>
<dbReference type="GeneID" id="93904045"/>
<dbReference type="KEGG" id="xft:PD_0344"/>
<dbReference type="HOGENOM" id="CLU_053947_2_1_6"/>
<dbReference type="UniPathway" id="UPA00115">
    <property type="reaction ID" value="UER00409"/>
</dbReference>
<dbReference type="Proteomes" id="UP000002516">
    <property type="component" value="Chromosome"/>
</dbReference>
<dbReference type="GO" id="GO:0017057">
    <property type="term" value="F:6-phosphogluconolactonase activity"/>
    <property type="evidence" value="ECO:0007669"/>
    <property type="project" value="UniProtKB-EC"/>
</dbReference>
<dbReference type="GO" id="GO:0005975">
    <property type="term" value="P:carbohydrate metabolic process"/>
    <property type="evidence" value="ECO:0007669"/>
    <property type="project" value="InterPro"/>
</dbReference>
<dbReference type="GO" id="GO:0006098">
    <property type="term" value="P:pentose-phosphate shunt"/>
    <property type="evidence" value="ECO:0007669"/>
    <property type="project" value="UniProtKB-UniPathway"/>
</dbReference>
<dbReference type="CDD" id="cd01400">
    <property type="entry name" value="6PGL"/>
    <property type="match status" value="1"/>
</dbReference>
<dbReference type="Gene3D" id="3.40.50.1360">
    <property type="match status" value="1"/>
</dbReference>
<dbReference type="InterPro" id="IPR005900">
    <property type="entry name" value="6-phosphogluconolactonase_DevB"/>
</dbReference>
<dbReference type="InterPro" id="IPR006148">
    <property type="entry name" value="Glc/Gal-6P_isomerase"/>
</dbReference>
<dbReference type="InterPro" id="IPR037171">
    <property type="entry name" value="NagB/RpiA_transferase-like"/>
</dbReference>
<dbReference type="InterPro" id="IPR039104">
    <property type="entry name" value="PGLS"/>
</dbReference>
<dbReference type="NCBIfam" id="TIGR01198">
    <property type="entry name" value="pgl"/>
    <property type="match status" value="1"/>
</dbReference>
<dbReference type="PANTHER" id="PTHR11054">
    <property type="entry name" value="6-PHOSPHOGLUCONOLACTONASE"/>
    <property type="match status" value="1"/>
</dbReference>
<dbReference type="PANTHER" id="PTHR11054:SF0">
    <property type="entry name" value="6-PHOSPHOGLUCONOLACTONASE"/>
    <property type="match status" value="1"/>
</dbReference>
<dbReference type="Pfam" id="PF01182">
    <property type="entry name" value="Glucosamine_iso"/>
    <property type="match status" value="1"/>
</dbReference>
<dbReference type="SUPFAM" id="SSF100950">
    <property type="entry name" value="NagB/RpiA/CoA transferase-like"/>
    <property type="match status" value="1"/>
</dbReference>
<protein>
    <recommendedName>
        <fullName>6-phosphogluconolactonase</fullName>
        <shortName>6PGL</shortName>
        <ecNumber>3.1.1.31</ecNumber>
    </recommendedName>
</protein>
<sequence>MIPTNDAHITLMNYDDPLEWAQSVTRELENILLQEITQRGRASLLLSGGTTPALVYETLATRPLDWSKIDIGLVDERWLSPQDKDSNAWLVRHTLLEHAKHATFLPLIRPGKTLNQCVHDANLQITHSPPPCAVVLGMGNDGHTASLFPGSLDLQKAINTPQPYVALDATGCPGAGVWPLRITLTPAGLNNIPHRLLLLRGKQKLKVLETALSCKDALDYPIRTAIDLPNARLRVHWCA</sequence>
<gene>
    <name type="primary">pgl</name>
    <name type="ordered locus">PD_0344</name>
</gene>
<comment type="function">
    <text>Hydrolysis of 6-phosphogluconolactone to 6-phosphogluconate.</text>
</comment>
<comment type="catalytic activity">
    <reaction>
        <text>6-phospho-D-glucono-1,5-lactone + H2O = 6-phospho-D-gluconate + H(+)</text>
        <dbReference type="Rhea" id="RHEA:12556"/>
        <dbReference type="ChEBI" id="CHEBI:15377"/>
        <dbReference type="ChEBI" id="CHEBI:15378"/>
        <dbReference type="ChEBI" id="CHEBI:57955"/>
        <dbReference type="ChEBI" id="CHEBI:58759"/>
        <dbReference type="EC" id="3.1.1.31"/>
    </reaction>
</comment>
<comment type="pathway">
    <text>Carbohydrate degradation; pentose phosphate pathway; D-ribulose 5-phosphate from D-glucose 6-phosphate (oxidative stage): step 2/3.</text>
</comment>
<comment type="similarity">
    <text evidence="1">Belongs to the glucosamine/galactosamine-6-phosphate isomerase family. 6-phosphogluconolactonase subfamily.</text>
</comment>